<gene>
    <name type="ORF">SPAC1805.10</name>
</gene>
<reference key="1">
    <citation type="journal article" date="2002" name="Nature">
        <title>The genome sequence of Schizosaccharomyces pombe.</title>
        <authorList>
            <person name="Wood V."/>
            <person name="Gwilliam R."/>
            <person name="Rajandream M.A."/>
            <person name="Lyne M.H."/>
            <person name="Lyne R."/>
            <person name="Stewart A."/>
            <person name="Sgouros J.G."/>
            <person name="Peat N."/>
            <person name="Hayles J."/>
            <person name="Baker S.G."/>
            <person name="Basham D."/>
            <person name="Bowman S."/>
            <person name="Brooks K."/>
            <person name="Brown D."/>
            <person name="Brown S."/>
            <person name="Chillingworth T."/>
            <person name="Churcher C.M."/>
            <person name="Collins M."/>
            <person name="Connor R."/>
            <person name="Cronin A."/>
            <person name="Davis P."/>
            <person name="Feltwell T."/>
            <person name="Fraser A."/>
            <person name="Gentles S."/>
            <person name="Goble A."/>
            <person name="Hamlin N."/>
            <person name="Harris D.E."/>
            <person name="Hidalgo J."/>
            <person name="Hodgson G."/>
            <person name="Holroyd S."/>
            <person name="Hornsby T."/>
            <person name="Howarth S."/>
            <person name="Huckle E.J."/>
            <person name="Hunt S."/>
            <person name="Jagels K."/>
            <person name="James K.D."/>
            <person name="Jones L."/>
            <person name="Jones M."/>
            <person name="Leather S."/>
            <person name="McDonald S."/>
            <person name="McLean J."/>
            <person name="Mooney P."/>
            <person name="Moule S."/>
            <person name="Mungall K.L."/>
            <person name="Murphy L.D."/>
            <person name="Niblett D."/>
            <person name="Odell C."/>
            <person name="Oliver K."/>
            <person name="O'Neil S."/>
            <person name="Pearson D."/>
            <person name="Quail M.A."/>
            <person name="Rabbinowitsch E."/>
            <person name="Rutherford K.M."/>
            <person name="Rutter S."/>
            <person name="Saunders D."/>
            <person name="Seeger K."/>
            <person name="Sharp S."/>
            <person name="Skelton J."/>
            <person name="Simmonds M.N."/>
            <person name="Squares R."/>
            <person name="Squares S."/>
            <person name="Stevens K."/>
            <person name="Taylor K."/>
            <person name="Taylor R.G."/>
            <person name="Tivey A."/>
            <person name="Walsh S.V."/>
            <person name="Warren T."/>
            <person name="Whitehead S."/>
            <person name="Woodward J.R."/>
            <person name="Volckaert G."/>
            <person name="Aert R."/>
            <person name="Robben J."/>
            <person name="Grymonprez B."/>
            <person name="Weltjens I."/>
            <person name="Vanstreels E."/>
            <person name="Rieger M."/>
            <person name="Schaefer M."/>
            <person name="Mueller-Auer S."/>
            <person name="Gabel C."/>
            <person name="Fuchs M."/>
            <person name="Duesterhoeft A."/>
            <person name="Fritzc C."/>
            <person name="Holzer E."/>
            <person name="Moestl D."/>
            <person name="Hilbert H."/>
            <person name="Borzym K."/>
            <person name="Langer I."/>
            <person name="Beck A."/>
            <person name="Lehrach H."/>
            <person name="Reinhardt R."/>
            <person name="Pohl T.M."/>
            <person name="Eger P."/>
            <person name="Zimmermann W."/>
            <person name="Wedler H."/>
            <person name="Wambutt R."/>
            <person name="Purnelle B."/>
            <person name="Goffeau A."/>
            <person name="Cadieu E."/>
            <person name="Dreano S."/>
            <person name="Gloux S."/>
            <person name="Lelaure V."/>
            <person name="Mottier S."/>
            <person name="Galibert F."/>
            <person name="Aves S.J."/>
            <person name="Xiang Z."/>
            <person name="Hunt C."/>
            <person name="Moore K."/>
            <person name="Hurst S.M."/>
            <person name="Lucas M."/>
            <person name="Rochet M."/>
            <person name="Gaillardin C."/>
            <person name="Tallada V.A."/>
            <person name="Garzon A."/>
            <person name="Thode G."/>
            <person name="Daga R.R."/>
            <person name="Cruzado L."/>
            <person name="Jimenez J."/>
            <person name="Sanchez M."/>
            <person name="del Rey F."/>
            <person name="Benito J."/>
            <person name="Dominguez A."/>
            <person name="Revuelta J.L."/>
            <person name="Moreno S."/>
            <person name="Armstrong J."/>
            <person name="Forsburg S.L."/>
            <person name="Cerutti L."/>
            <person name="Lowe T."/>
            <person name="McCombie W.R."/>
            <person name="Paulsen I."/>
            <person name="Potashkin J."/>
            <person name="Shpakovski G.V."/>
            <person name="Ussery D."/>
            <person name="Barrell B.G."/>
            <person name="Nurse P."/>
        </authorList>
    </citation>
    <scope>NUCLEOTIDE SEQUENCE [LARGE SCALE GENOMIC DNA]</scope>
    <source>
        <strain>972 / ATCC 24843</strain>
    </source>
</reference>
<proteinExistence type="predicted"/>
<name>YKEA_SCHPO</name>
<dbReference type="EMBL" id="CU329670">
    <property type="protein sequence ID" value="CAB55851.1"/>
    <property type="molecule type" value="Genomic_DNA"/>
</dbReference>
<dbReference type="PIR" id="T37895">
    <property type="entry name" value="T37895"/>
</dbReference>
<dbReference type="RefSeq" id="NP_593921.1">
    <property type="nucleotide sequence ID" value="NM_001019350.2"/>
</dbReference>
<dbReference type="BioGRID" id="278863">
    <property type="interactions" value="10"/>
</dbReference>
<dbReference type="iPTMnet" id="Q9UTG5"/>
<dbReference type="PaxDb" id="4896-SPAC1805.10.1"/>
<dbReference type="EnsemblFungi" id="SPAC1805.10.1">
    <property type="protein sequence ID" value="SPAC1805.10.1:pep"/>
    <property type="gene ID" value="SPAC1805.10"/>
</dbReference>
<dbReference type="KEGG" id="spo:2542399"/>
<dbReference type="PomBase" id="SPAC1805.10"/>
<dbReference type="VEuPathDB" id="FungiDB:SPAC1805.10"/>
<dbReference type="HOGENOM" id="CLU_504484_0_0_1"/>
<dbReference type="InParanoid" id="Q9UTG5"/>
<dbReference type="OMA" id="LVEHFCI"/>
<dbReference type="PRO" id="PR:Q9UTG5"/>
<dbReference type="Proteomes" id="UP000002485">
    <property type="component" value="Chromosome I"/>
</dbReference>
<dbReference type="GO" id="GO:0005829">
    <property type="term" value="C:cytosol"/>
    <property type="evidence" value="ECO:0007005"/>
    <property type="project" value="PomBase"/>
</dbReference>
<dbReference type="GO" id="GO:0005634">
    <property type="term" value="C:nucleus"/>
    <property type="evidence" value="ECO:0007005"/>
    <property type="project" value="PomBase"/>
</dbReference>
<dbReference type="GO" id="GO:0016236">
    <property type="term" value="P:macroautophagy"/>
    <property type="evidence" value="ECO:0000266"/>
    <property type="project" value="PomBase"/>
</dbReference>
<dbReference type="GO" id="GO:0044395">
    <property type="term" value="P:protein targeting to vacuolar membrane"/>
    <property type="evidence" value="ECO:0000266"/>
    <property type="project" value="PomBase"/>
</dbReference>
<organism>
    <name type="scientific">Schizosaccharomyces pombe (strain 972 / ATCC 24843)</name>
    <name type="common">Fission yeast</name>
    <dbReference type="NCBI Taxonomy" id="284812"/>
    <lineage>
        <taxon>Eukaryota</taxon>
        <taxon>Fungi</taxon>
        <taxon>Dikarya</taxon>
        <taxon>Ascomycota</taxon>
        <taxon>Taphrinomycotina</taxon>
        <taxon>Schizosaccharomycetes</taxon>
        <taxon>Schizosaccharomycetales</taxon>
        <taxon>Schizosaccharomycetaceae</taxon>
        <taxon>Schizosaccharomyces</taxon>
    </lineage>
</organism>
<protein>
    <recommendedName>
        <fullName>Uncharacterized protein C1805.10</fullName>
    </recommendedName>
</protein>
<feature type="chain" id="PRO_0000116826" description="Uncharacterized protein C1805.10">
    <location>
        <begin position="1"/>
        <end position="527"/>
    </location>
</feature>
<sequence length="527" mass="60223">MVLVEHFCIHRCTPDGVIEMLWMYQSELMGNKQPILNKDEMAANNPELEALKNQIALFHGMYGFSVETKDILKEQPTDSKSTTSSAPKNSPFSLLESYDCLQVDTATVQKVLIKRPEGCRELHSCNVLMNNDEKNTLSLTPSIFLSVMKPCPKTSVLVTTVAALWEQFNIFHGSYLFDEIEKKSSFEIIDRWWTSVLSPLECGGYLLKSLSVLPVLHSLDDPLVKKMNDVIRKEDGTMGSLILFTKSGQPRLLSLQGLRLKPEFRNLLSYYCSHNYQHLIENESADINIAHRPLTTLFSDTDSNLAITNEVGEMTLRIFCLKKKSNKRLLAILWKLGQTSSEEVSNAFTNYIIGLAPLSQSVFDSQASTGFNFKIQKRVETELDMFWYIVANCTTGLAVVNTDFPLNDAHHLWNHLENLCNNQSFNSCQLQKITRGYWISLQQKEYNSRIYVDTVADQSQTYTPTRRFTKQGSQGDFNAIHSRKVPVTHTFTYILISKTNRWNSLHDTKAKIQRFIDQFDLTPTLYD</sequence>
<accession>Q9UTG5</accession>
<keyword id="KW-1185">Reference proteome</keyword>